<name>NADK_METPP</name>
<feature type="chain" id="PRO_1000005423" description="NAD kinase">
    <location>
        <begin position="1"/>
        <end position="301"/>
    </location>
</feature>
<feature type="active site" description="Proton acceptor" evidence="1">
    <location>
        <position position="73"/>
    </location>
</feature>
<feature type="binding site" evidence="1">
    <location>
        <begin position="73"/>
        <end position="74"/>
    </location>
    <ligand>
        <name>NAD(+)</name>
        <dbReference type="ChEBI" id="CHEBI:57540"/>
    </ligand>
</feature>
<feature type="binding site" evidence="1">
    <location>
        <begin position="151"/>
        <end position="152"/>
    </location>
    <ligand>
        <name>NAD(+)</name>
        <dbReference type="ChEBI" id="CHEBI:57540"/>
    </ligand>
</feature>
<feature type="binding site" evidence="1">
    <location>
        <position position="179"/>
    </location>
    <ligand>
        <name>NAD(+)</name>
        <dbReference type="ChEBI" id="CHEBI:57540"/>
    </ligand>
</feature>
<feature type="binding site" evidence="1">
    <location>
        <position position="181"/>
    </location>
    <ligand>
        <name>NAD(+)</name>
        <dbReference type="ChEBI" id="CHEBI:57540"/>
    </ligand>
</feature>
<feature type="binding site" evidence="1">
    <location>
        <begin position="192"/>
        <end position="197"/>
    </location>
    <ligand>
        <name>NAD(+)</name>
        <dbReference type="ChEBI" id="CHEBI:57540"/>
    </ligand>
</feature>
<feature type="binding site" evidence="1">
    <location>
        <position position="216"/>
    </location>
    <ligand>
        <name>NAD(+)</name>
        <dbReference type="ChEBI" id="CHEBI:57540"/>
    </ligand>
</feature>
<feature type="binding site" evidence="1">
    <location>
        <position position="250"/>
    </location>
    <ligand>
        <name>NAD(+)</name>
        <dbReference type="ChEBI" id="CHEBI:57540"/>
    </ligand>
</feature>
<gene>
    <name evidence="1" type="primary">nadK</name>
    <name type="ordered locus">Mpe_A3334</name>
</gene>
<reference key="1">
    <citation type="journal article" date="2007" name="J. Bacteriol.">
        <title>Whole-genome analysis of the methyl tert-butyl ether-degrading beta-proteobacterium Methylibium petroleiphilum PM1.</title>
        <authorList>
            <person name="Kane S.R."/>
            <person name="Chakicherla A.Y."/>
            <person name="Chain P.S.G."/>
            <person name="Schmidt R."/>
            <person name="Shin M.W."/>
            <person name="Legler T.C."/>
            <person name="Scow K.M."/>
            <person name="Larimer F.W."/>
            <person name="Lucas S.M."/>
            <person name="Richardson P.M."/>
            <person name="Hristova K.R."/>
        </authorList>
    </citation>
    <scope>NUCLEOTIDE SEQUENCE [LARGE SCALE GENOMIC DNA]</scope>
    <source>
        <strain>ATCC BAA-1232 / LMG 22953 / PM1</strain>
    </source>
</reference>
<proteinExistence type="inferred from homology"/>
<keyword id="KW-0067">ATP-binding</keyword>
<keyword id="KW-0963">Cytoplasm</keyword>
<keyword id="KW-0418">Kinase</keyword>
<keyword id="KW-0520">NAD</keyword>
<keyword id="KW-0521">NADP</keyword>
<keyword id="KW-0547">Nucleotide-binding</keyword>
<keyword id="KW-1185">Reference proteome</keyword>
<keyword id="KW-0808">Transferase</keyword>
<accession>A2SL48</accession>
<sequence length="301" mass="32537">MASRFRHAALVGKYQAPGSRQVLASVAEFLTNQGLEVSLDTTTAMAVGLPDYGALDAAQIGKHCDLAVVVGGDGTMLGTARQLARYGVPLIGINQGRLGFMTDIPMAEFRETIAPMIAGDYEEEHRTMLEGCVKRPSGDEFDVIYETFAVNDVVVSRGASAGMVELRVDVQDQFVANFRADGLIISSPTGSTAYALSAGGPILHPGISGWLMVPIAPHALSNRPIVLPDDSEVRIEIVAGRDASVNFDHQSLASLLHGDRICVRRSEHRVRVLHPRGWNFYATLRRKLHWNEGVLPDGAHS</sequence>
<dbReference type="EC" id="2.7.1.23" evidence="1"/>
<dbReference type="EMBL" id="CP000555">
    <property type="protein sequence ID" value="ABM96287.1"/>
    <property type="molecule type" value="Genomic_DNA"/>
</dbReference>
<dbReference type="RefSeq" id="WP_011830908.1">
    <property type="nucleotide sequence ID" value="NC_008825.1"/>
</dbReference>
<dbReference type="SMR" id="A2SL48"/>
<dbReference type="STRING" id="420662.Mpe_A3334"/>
<dbReference type="KEGG" id="mpt:Mpe_A3334"/>
<dbReference type="eggNOG" id="COG0061">
    <property type="taxonomic scope" value="Bacteria"/>
</dbReference>
<dbReference type="HOGENOM" id="CLU_008831_0_1_4"/>
<dbReference type="Proteomes" id="UP000000366">
    <property type="component" value="Chromosome"/>
</dbReference>
<dbReference type="GO" id="GO:0005737">
    <property type="term" value="C:cytoplasm"/>
    <property type="evidence" value="ECO:0007669"/>
    <property type="project" value="UniProtKB-SubCell"/>
</dbReference>
<dbReference type="GO" id="GO:0005524">
    <property type="term" value="F:ATP binding"/>
    <property type="evidence" value="ECO:0007669"/>
    <property type="project" value="UniProtKB-KW"/>
</dbReference>
<dbReference type="GO" id="GO:0046872">
    <property type="term" value="F:metal ion binding"/>
    <property type="evidence" value="ECO:0007669"/>
    <property type="project" value="UniProtKB-UniRule"/>
</dbReference>
<dbReference type="GO" id="GO:0051287">
    <property type="term" value="F:NAD binding"/>
    <property type="evidence" value="ECO:0007669"/>
    <property type="project" value="UniProtKB-ARBA"/>
</dbReference>
<dbReference type="GO" id="GO:0003951">
    <property type="term" value="F:NAD+ kinase activity"/>
    <property type="evidence" value="ECO:0007669"/>
    <property type="project" value="UniProtKB-UniRule"/>
</dbReference>
<dbReference type="GO" id="GO:0019674">
    <property type="term" value="P:NAD metabolic process"/>
    <property type="evidence" value="ECO:0007669"/>
    <property type="project" value="InterPro"/>
</dbReference>
<dbReference type="GO" id="GO:0006741">
    <property type="term" value="P:NADP biosynthetic process"/>
    <property type="evidence" value="ECO:0007669"/>
    <property type="project" value="UniProtKB-UniRule"/>
</dbReference>
<dbReference type="Gene3D" id="3.40.50.10330">
    <property type="entry name" value="Probable inorganic polyphosphate/atp-NAD kinase, domain 1"/>
    <property type="match status" value="1"/>
</dbReference>
<dbReference type="Gene3D" id="2.60.200.30">
    <property type="entry name" value="Probable inorganic polyphosphate/atp-NAD kinase, domain 2"/>
    <property type="match status" value="1"/>
</dbReference>
<dbReference type="HAMAP" id="MF_00361">
    <property type="entry name" value="NAD_kinase"/>
    <property type="match status" value="1"/>
</dbReference>
<dbReference type="InterPro" id="IPR017438">
    <property type="entry name" value="ATP-NAD_kinase_N"/>
</dbReference>
<dbReference type="InterPro" id="IPR017437">
    <property type="entry name" value="ATP-NAD_kinase_PpnK-typ_C"/>
</dbReference>
<dbReference type="InterPro" id="IPR016064">
    <property type="entry name" value="NAD/diacylglycerol_kinase_sf"/>
</dbReference>
<dbReference type="InterPro" id="IPR002504">
    <property type="entry name" value="NADK"/>
</dbReference>
<dbReference type="NCBIfam" id="NF002561">
    <property type="entry name" value="PRK02155.1"/>
    <property type="match status" value="1"/>
</dbReference>
<dbReference type="PANTHER" id="PTHR20275">
    <property type="entry name" value="NAD KINASE"/>
    <property type="match status" value="1"/>
</dbReference>
<dbReference type="PANTHER" id="PTHR20275:SF0">
    <property type="entry name" value="NAD KINASE"/>
    <property type="match status" value="1"/>
</dbReference>
<dbReference type="Pfam" id="PF01513">
    <property type="entry name" value="NAD_kinase"/>
    <property type="match status" value="1"/>
</dbReference>
<dbReference type="Pfam" id="PF20143">
    <property type="entry name" value="NAD_kinase_C"/>
    <property type="match status" value="1"/>
</dbReference>
<dbReference type="SUPFAM" id="SSF111331">
    <property type="entry name" value="NAD kinase/diacylglycerol kinase-like"/>
    <property type="match status" value="1"/>
</dbReference>
<comment type="function">
    <text evidence="1">Involved in the regulation of the intracellular balance of NAD and NADP, and is a key enzyme in the biosynthesis of NADP. Catalyzes specifically the phosphorylation on 2'-hydroxyl of the adenosine moiety of NAD to yield NADP.</text>
</comment>
<comment type="catalytic activity">
    <reaction evidence="1">
        <text>NAD(+) + ATP = ADP + NADP(+) + H(+)</text>
        <dbReference type="Rhea" id="RHEA:18629"/>
        <dbReference type="ChEBI" id="CHEBI:15378"/>
        <dbReference type="ChEBI" id="CHEBI:30616"/>
        <dbReference type="ChEBI" id="CHEBI:57540"/>
        <dbReference type="ChEBI" id="CHEBI:58349"/>
        <dbReference type="ChEBI" id="CHEBI:456216"/>
        <dbReference type="EC" id="2.7.1.23"/>
    </reaction>
</comment>
<comment type="cofactor">
    <cofactor evidence="1">
        <name>a divalent metal cation</name>
        <dbReference type="ChEBI" id="CHEBI:60240"/>
    </cofactor>
</comment>
<comment type="subcellular location">
    <subcellularLocation>
        <location evidence="1">Cytoplasm</location>
    </subcellularLocation>
</comment>
<comment type="similarity">
    <text evidence="1">Belongs to the NAD kinase family.</text>
</comment>
<evidence type="ECO:0000255" key="1">
    <source>
        <dbReference type="HAMAP-Rule" id="MF_00361"/>
    </source>
</evidence>
<organism>
    <name type="scientific">Methylibium petroleiphilum (strain ATCC BAA-1232 / LMG 22953 / PM1)</name>
    <dbReference type="NCBI Taxonomy" id="420662"/>
    <lineage>
        <taxon>Bacteria</taxon>
        <taxon>Pseudomonadati</taxon>
        <taxon>Pseudomonadota</taxon>
        <taxon>Betaproteobacteria</taxon>
        <taxon>Burkholderiales</taxon>
        <taxon>Sphaerotilaceae</taxon>
        <taxon>Methylibium</taxon>
    </lineage>
</organism>
<protein>
    <recommendedName>
        <fullName evidence="1">NAD kinase</fullName>
        <ecNumber evidence="1">2.7.1.23</ecNumber>
    </recommendedName>
    <alternativeName>
        <fullName evidence="1">ATP-dependent NAD kinase</fullName>
    </alternativeName>
</protein>